<reference key="1">
    <citation type="submission" date="2007-02" db="EMBL/GenBank/DDBJ databases">
        <title>Complete sequence of chromosome of Shewanella baltica OS155.</title>
        <authorList>
            <consortium name="US DOE Joint Genome Institute"/>
            <person name="Copeland A."/>
            <person name="Lucas S."/>
            <person name="Lapidus A."/>
            <person name="Barry K."/>
            <person name="Detter J.C."/>
            <person name="Glavina del Rio T."/>
            <person name="Hammon N."/>
            <person name="Israni S."/>
            <person name="Dalin E."/>
            <person name="Tice H."/>
            <person name="Pitluck S."/>
            <person name="Sims D.R."/>
            <person name="Brettin T."/>
            <person name="Bruce D."/>
            <person name="Han C."/>
            <person name="Tapia R."/>
            <person name="Brainard J."/>
            <person name="Schmutz J."/>
            <person name="Larimer F."/>
            <person name="Land M."/>
            <person name="Hauser L."/>
            <person name="Kyrpides N."/>
            <person name="Mikhailova N."/>
            <person name="Brettar I."/>
            <person name="Klappenbach J."/>
            <person name="Konstantinidis K."/>
            <person name="Rodrigues J."/>
            <person name="Tiedje J."/>
            <person name="Richardson P."/>
        </authorList>
    </citation>
    <scope>NUCLEOTIDE SEQUENCE [LARGE SCALE GENOMIC DNA]</scope>
    <source>
        <strain>OS155 / ATCC BAA-1091</strain>
    </source>
</reference>
<name>TDH_SHEB5</name>
<feature type="chain" id="PRO_1000051652" description="L-threonine 3-dehydrogenase">
    <location>
        <begin position="1"/>
        <end position="341"/>
    </location>
</feature>
<feature type="active site" description="Charge relay system" evidence="1">
    <location>
        <position position="40"/>
    </location>
</feature>
<feature type="active site" description="Charge relay system" evidence="1">
    <location>
        <position position="43"/>
    </location>
</feature>
<feature type="binding site" evidence="1">
    <location>
        <position position="38"/>
    </location>
    <ligand>
        <name>Zn(2+)</name>
        <dbReference type="ChEBI" id="CHEBI:29105"/>
        <label>1</label>
        <note>catalytic</note>
    </ligand>
</feature>
<feature type="binding site" evidence="1">
    <location>
        <position position="63"/>
    </location>
    <ligand>
        <name>Zn(2+)</name>
        <dbReference type="ChEBI" id="CHEBI:29105"/>
        <label>1</label>
        <note>catalytic</note>
    </ligand>
</feature>
<feature type="binding site" evidence="1">
    <location>
        <position position="64"/>
    </location>
    <ligand>
        <name>Zn(2+)</name>
        <dbReference type="ChEBI" id="CHEBI:29105"/>
        <label>1</label>
        <note>catalytic</note>
    </ligand>
</feature>
<feature type="binding site" evidence="1">
    <location>
        <position position="93"/>
    </location>
    <ligand>
        <name>Zn(2+)</name>
        <dbReference type="ChEBI" id="CHEBI:29105"/>
        <label>2</label>
    </ligand>
</feature>
<feature type="binding site" evidence="1">
    <location>
        <position position="96"/>
    </location>
    <ligand>
        <name>Zn(2+)</name>
        <dbReference type="ChEBI" id="CHEBI:29105"/>
        <label>2</label>
    </ligand>
</feature>
<feature type="binding site" evidence="1">
    <location>
        <position position="99"/>
    </location>
    <ligand>
        <name>Zn(2+)</name>
        <dbReference type="ChEBI" id="CHEBI:29105"/>
        <label>2</label>
    </ligand>
</feature>
<feature type="binding site" evidence="1">
    <location>
        <position position="107"/>
    </location>
    <ligand>
        <name>Zn(2+)</name>
        <dbReference type="ChEBI" id="CHEBI:29105"/>
        <label>2</label>
    </ligand>
</feature>
<feature type="binding site" evidence="1">
    <location>
        <position position="175"/>
    </location>
    <ligand>
        <name>NAD(+)</name>
        <dbReference type="ChEBI" id="CHEBI:57540"/>
    </ligand>
</feature>
<feature type="binding site" evidence="1">
    <location>
        <position position="195"/>
    </location>
    <ligand>
        <name>NAD(+)</name>
        <dbReference type="ChEBI" id="CHEBI:57540"/>
    </ligand>
</feature>
<feature type="binding site" evidence="1">
    <location>
        <position position="200"/>
    </location>
    <ligand>
        <name>NAD(+)</name>
        <dbReference type="ChEBI" id="CHEBI:57540"/>
    </ligand>
</feature>
<feature type="binding site" evidence="1">
    <location>
        <begin position="262"/>
        <end position="264"/>
    </location>
    <ligand>
        <name>NAD(+)</name>
        <dbReference type="ChEBI" id="CHEBI:57540"/>
    </ligand>
</feature>
<feature type="binding site" evidence="1">
    <location>
        <begin position="286"/>
        <end position="287"/>
    </location>
    <ligand>
        <name>NAD(+)</name>
        <dbReference type="ChEBI" id="CHEBI:57540"/>
    </ligand>
</feature>
<feature type="site" description="Important for catalytic activity for the proton relay mechanism but does not participate directly in the coordination of zinc atom" evidence="1">
    <location>
        <position position="148"/>
    </location>
</feature>
<organism>
    <name type="scientific">Shewanella baltica (strain OS155 / ATCC BAA-1091)</name>
    <dbReference type="NCBI Taxonomy" id="325240"/>
    <lineage>
        <taxon>Bacteria</taxon>
        <taxon>Pseudomonadati</taxon>
        <taxon>Pseudomonadota</taxon>
        <taxon>Gammaproteobacteria</taxon>
        <taxon>Alteromonadales</taxon>
        <taxon>Shewanellaceae</taxon>
        <taxon>Shewanella</taxon>
    </lineage>
</organism>
<evidence type="ECO:0000255" key="1">
    <source>
        <dbReference type="HAMAP-Rule" id="MF_00627"/>
    </source>
</evidence>
<gene>
    <name evidence="1" type="primary">tdh</name>
    <name type="ordered locus">Sbal_0057</name>
</gene>
<dbReference type="EC" id="1.1.1.103" evidence="1"/>
<dbReference type="EMBL" id="CP000563">
    <property type="protein sequence ID" value="ABN59593.1"/>
    <property type="molecule type" value="Genomic_DNA"/>
</dbReference>
<dbReference type="RefSeq" id="WP_006079369.1">
    <property type="nucleotide sequence ID" value="NC_009052.1"/>
</dbReference>
<dbReference type="SMR" id="A3CYN0"/>
<dbReference type="STRING" id="325240.Sbal_0057"/>
<dbReference type="GeneID" id="11775065"/>
<dbReference type="KEGG" id="sbl:Sbal_0057"/>
<dbReference type="HOGENOM" id="CLU_026673_11_0_6"/>
<dbReference type="OrthoDB" id="9773078at2"/>
<dbReference type="UniPathway" id="UPA00046">
    <property type="reaction ID" value="UER00505"/>
</dbReference>
<dbReference type="Proteomes" id="UP000001557">
    <property type="component" value="Chromosome"/>
</dbReference>
<dbReference type="GO" id="GO:0005737">
    <property type="term" value="C:cytoplasm"/>
    <property type="evidence" value="ECO:0007669"/>
    <property type="project" value="UniProtKB-SubCell"/>
</dbReference>
<dbReference type="GO" id="GO:0008743">
    <property type="term" value="F:L-threonine 3-dehydrogenase activity"/>
    <property type="evidence" value="ECO:0007669"/>
    <property type="project" value="UniProtKB-UniRule"/>
</dbReference>
<dbReference type="GO" id="GO:0008270">
    <property type="term" value="F:zinc ion binding"/>
    <property type="evidence" value="ECO:0007669"/>
    <property type="project" value="UniProtKB-UniRule"/>
</dbReference>
<dbReference type="GO" id="GO:0019518">
    <property type="term" value="P:L-threonine catabolic process to glycine"/>
    <property type="evidence" value="ECO:0007669"/>
    <property type="project" value="UniProtKB-UniPathway"/>
</dbReference>
<dbReference type="Gene3D" id="3.90.180.10">
    <property type="entry name" value="Medium-chain alcohol dehydrogenases, catalytic domain"/>
    <property type="match status" value="1"/>
</dbReference>
<dbReference type="Gene3D" id="3.40.50.720">
    <property type="entry name" value="NAD(P)-binding Rossmann-like Domain"/>
    <property type="match status" value="1"/>
</dbReference>
<dbReference type="HAMAP" id="MF_00627">
    <property type="entry name" value="Thr_dehydrog"/>
    <property type="match status" value="1"/>
</dbReference>
<dbReference type="InterPro" id="IPR013149">
    <property type="entry name" value="ADH-like_C"/>
</dbReference>
<dbReference type="InterPro" id="IPR013154">
    <property type="entry name" value="ADH-like_N"/>
</dbReference>
<dbReference type="InterPro" id="IPR002328">
    <property type="entry name" value="ADH_Zn_CS"/>
</dbReference>
<dbReference type="InterPro" id="IPR011032">
    <property type="entry name" value="GroES-like_sf"/>
</dbReference>
<dbReference type="InterPro" id="IPR004627">
    <property type="entry name" value="L-Threonine_3-DHase"/>
</dbReference>
<dbReference type="InterPro" id="IPR036291">
    <property type="entry name" value="NAD(P)-bd_dom_sf"/>
</dbReference>
<dbReference type="InterPro" id="IPR020843">
    <property type="entry name" value="PKS_ER"/>
</dbReference>
<dbReference type="InterPro" id="IPR050129">
    <property type="entry name" value="Zn_alcohol_dh"/>
</dbReference>
<dbReference type="NCBIfam" id="NF003808">
    <property type="entry name" value="PRK05396.1"/>
    <property type="match status" value="1"/>
</dbReference>
<dbReference type="NCBIfam" id="TIGR00692">
    <property type="entry name" value="tdh"/>
    <property type="match status" value="1"/>
</dbReference>
<dbReference type="PANTHER" id="PTHR43401">
    <property type="entry name" value="L-THREONINE 3-DEHYDROGENASE"/>
    <property type="match status" value="1"/>
</dbReference>
<dbReference type="PANTHER" id="PTHR43401:SF2">
    <property type="entry name" value="L-THREONINE 3-DEHYDROGENASE"/>
    <property type="match status" value="1"/>
</dbReference>
<dbReference type="Pfam" id="PF08240">
    <property type="entry name" value="ADH_N"/>
    <property type="match status" value="1"/>
</dbReference>
<dbReference type="Pfam" id="PF00107">
    <property type="entry name" value="ADH_zinc_N"/>
    <property type="match status" value="1"/>
</dbReference>
<dbReference type="SMART" id="SM00829">
    <property type="entry name" value="PKS_ER"/>
    <property type="match status" value="1"/>
</dbReference>
<dbReference type="SUPFAM" id="SSF50129">
    <property type="entry name" value="GroES-like"/>
    <property type="match status" value="1"/>
</dbReference>
<dbReference type="SUPFAM" id="SSF51735">
    <property type="entry name" value="NAD(P)-binding Rossmann-fold domains"/>
    <property type="match status" value="1"/>
</dbReference>
<dbReference type="PROSITE" id="PS00059">
    <property type="entry name" value="ADH_ZINC"/>
    <property type="match status" value="1"/>
</dbReference>
<keyword id="KW-0963">Cytoplasm</keyword>
<keyword id="KW-0479">Metal-binding</keyword>
<keyword id="KW-0520">NAD</keyword>
<keyword id="KW-0560">Oxidoreductase</keyword>
<keyword id="KW-1185">Reference proteome</keyword>
<keyword id="KW-0862">Zinc</keyword>
<sequence>MKALSKLKAEKGIWLVDAPKPVMGHNDLLIKIKKTAICGTDMHIYNWDEWSQKTIPVPMVVGHEYVGEVVDIGQEVRGFKIGDRVSGEGHITCGHCRNCRAGRTHLCRNTSGVGVNREGSFAEYLVIPAFNAFKIPDDISDDLASIFDPFGNAVHTALSFDLVGEDVLITGAGPIGIMAAAVCRHVGARHVVITDVNEYRLELARKMGATRAVNVSKESLKDVMKELGMTEGFDVGLEMSGVPSAFHAMLDTMNHGGKVAMLGIPGGEMAIDWSKVIFKGLVIKGIYGREMFETWYKMASLIQSGLDISPIITHHFKIDDFQQGFDAMGSGQSGKVILSWD</sequence>
<protein>
    <recommendedName>
        <fullName evidence="1">L-threonine 3-dehydrogenase</fullName>
        <shortName evidence="1">TDH</shortName>
        <ecNumber evidence="1">1.1.1.103</ecNumber>
    </recommendedName>
</protein>
<proteinExistence type="inferred from homology"/>
<comment type="function">
    <text evidence="1">Catalyzes the NAD(+)-dependent oxidation of L-threonine to 2-amino-3-ketobutyrate.</text>
</comment>
<comment type="catalytic activity">
    <reaction evidence="1">
        <text>L-threonine + NAD(+) = (2S)-2-amino-3-oxobutanoate + NADH + H(+)</text>
        <dbReference type="Rhea" id="RHEA:13161"/>
        <dbReference type="ChEBI" id="CHEBI:15378"/>
        <dbReference type="ChEBI" id="CHEBI:57540"/>
        <dbReference type="ChEBI" id="CHEBI:57926"/>
        <dbReference type="ChEBI" id="CHEBI:57945"/>
        <dbReference type="ChEBI" id="CHEBI:78948"/>
        <dbReference type="EC" id="1.1.1.103"/>
    </reaction>
</comment>
<comment type="cofactor">
    <cofactor evidence="1">
        <name>Zn(2+)</name>
        <dbReference type="ChEBI" id="CHEBI:29105"/>
    </cofactor>
    <text evidence="1">Binds 2 Zn(2+) ions per subunit.</text>
</comment>
<comment type="pathway">
    <text evidence="1">Amino-acid degradation; L-threonine degradation via oxydo-reductase pathway; glycine from L-threonine: step 1/2.</text>
</comment>
<comment type="subunit">
    <text evidence="1">Homotetramer.</text>
</comment>
<comment type="subcellular location">
    <subcellularLocation>
        <location evidence="1">Cytoplasm</location>
    </subcellularLocation>
</comment>
<comment type="similarity">
    <text evidence="1">Belongs to the zinc-containing alcohol dehydrogenase family.</text>
</comment>
<accession>A3CYN0</accession>